<comment type="function">
    <text evidence="1">Catalyzes the methylthiolation of an aspartic acid residue of ribosomal protein uS12.</text>
</comment>
<comment type="catalytic activity">
    <reaction evidence="1">
        <text>L-aspartate(89)-[ribosomal protein uS12]-hydrogen + (sulfur carrier)-SH + AH2 + 2 S-adenosyl-L-methionine = 3-methylsulfanyl-L-aspartate(89)-[ribosomal protein uS12]-hydrogen + (sulfur carrier)-H + 5'-deoxyadenosine + L-methionine + A + S-adenosyl-L-homocysteine + 2 H(+)</text>
        <dbReference type="Rhea" id="RHEA:37087"/>
        <dbReference type="Rhea" id="RHEA-COMP:10460"/>
        <dbReference type="Rhea" id="RHEA-COMP:10461"/>
        <dbReference type="Rhea" id="RHEA-COMP:14737"/>
        <dbReference type="Rhea" id="RHEA-COMP:14739"/>
        <dbReference type="ChEBI" id="CHEBI:13193"/>
        <dbReference type="ChEBI" id="CHEBI:15378"/>
        <dbReference type="ChEBI" id="CHEBI:17319"/>
        <dbReference type="ChEBI" id="CHEBI:17499"/>
        <dbReference type="ChEBI" id="CHEBI:29917"/>
        <dbReference type="ChEBI" id="CHEBI:29961"/>
        <dbReference type="ChEBI" id="CHEBI:57844"/>
        <dbReference type="ChEBI" id="CHEBI:57856"/>
        <dbReference type="ChEBI" id="CHEBI:59789"/>
        <dbReference type="ChEBI" id="CHEBI:64428"/>
        <dbReference type="ChEBI" id="CHEBI:73599"/>
        <dbReference type="EC" id="2.8.4.4"/>
    </reaction>
</comment>
<comment type="cofactor">
    <cofactor evidence="1">
        <name>[4Fe-4S] cluster</name>
        <dbReference type="ChEBI" id="CHEBI:49883"/>
    </cofactor>
    <text evidence="1">Binds 2 [4Fe-4S] clusters. One cluster is coordinated with 3 cysteines and an exchangeable S-adenosyl-L-methionine.</text>
</comment>
<comment type="subcellular location">
    <subcellularLocation>
        <location evidence="1">Cytoplasm</location>
    </subcellularLocation>
</comment>
<comment type="similarity">
    <text evidence="1">Belongs to the methylthiotransferase family. RimO subfamily.</text>
</comment>
<feature type="chain" id="PRO_0000375003" description="Ribosomal protein uS12 methylthiotransferase RimO">
    <location>
        <begin position="1"/>
        <end position="481"/>
    </location>
</feature>
<feature type="domain" description="MTTase N-terminal" evidence="1">
    <location>
        <begin position="38"/>
        <end position="148"/>
    </location>
</feature>
<feature type="domain" description="Radical SAM core" evidence="2">
    <location>
        <begin position="166"/>
        <end position="403"/>
    </location>
</feature>
<feature type="domain" description="TRAM" evidence="1">
    <location>
        <begin position="406"/>
        <end position="472"/>
    </location>
</feature>
<feature type="binding site" evidence="1">
    <location>
        <position position="47"/>
    </location>
    <ligand>
        <name>[4Fe-4S] cluster</name>
        <dbReference type="ChEBI" id="CHEBI:49883"/>
        <label>1</label>
    </ligand>
</feature>
<feature type="binding site" evidence="1">
    <location>
        <position position="83"/>
    </location>
    <ligand>
        <name>[4Fe-4S] cluster</name>
        <dbReference type="ChEBI" id="CHEBI:49883"/>
        <label>1</label>
    </ligand>
</feature>
<feature type="binding site" evidence="1">
    <location>
        <position position="112"/>
    </location>
    <ligand>
        <name>[4Fe-4S] cluster</name>
        <dbReference type="ChEBI" id="CHEBI:49883"/>
        <label>1</label>
    </ligand>
</feature>
<feature type="binding site" evidence="1">
    <location>
        <position position="180"/>
    </location>
    <ligand>
        <name>[4Fe-4S] cluster</name>
        <dbReference type="ChEBI" id="CHEBI:49883"/>
        <label>2</label>
        <note>4Fe-4S-S-AdoMet</note>
    </ligand>
</feature>
<feature type="binding site" evidence="1">
    <location>
        <position position="184"/>
    </location>
    <ligand>
        <name>[4Fe-4S] cluster</name>
        <dbReference type="ChEBI" id="CHEBI:49883"/>
        <label>2</label>
        <note>4Fe-4S-S-AdoMet</note>
    </ligand>
</feature>
<feature type="binding site" evidence="1">
    <location>
        <position position="187"/>
    </location>
    <ligand>
        <name>[4Fe-4S] cluster</name>
        <dbReference type="ChEBI" id="CHEBI:49883"/>
        <label>2</label>
        <note>4Fe-4S-S-AdoMet</note>
    </ligand>
</feature>
<keyword id="KW-0004">4Fe-4S</keyword>
<keyword id="KW-0963">Cytoplasm</keyword>
<keyword id="KW-0408">Iron</keyword>
<keyword id="KW-0411">Iron-sulfur</keyword>
<keyword id="KW-0479">Metal-binding</keyword>
<keyword id="KW-1185">Reference proteome</keyword>
<keyword id="KW-0949">S-adenosyl-L-methionine</keyword>
<keyword id="KW-0808">Transferase</keyword>
<name>RIMO_SHEON</name>
<accession>Q8EA37</accession>
<sequence length="481" mass="53634">MTVETFHPKQTTTLETPAKTLEAASADSVNTGNVATGNRIGFVSLGCPKNLVDSERILTQLRIDGYEVTNSYDNADLVIVNTCGFIDAAVEESLDAVREALEENGKVIVTGCLGAKENQIREVHPDVLEITGPHSYEAVLKHVHKYVPKPEHNPFTSLIPQTGVKLTPKHYAYLKISEGCDNRCTFCIIPALRGDLDSRGAGSVLDEAKRLVEAGVQEILVVSQDTSAYGKDKGGRTDFWNGMPVKQDITSLARQLGKMGAWVRLHYIYPYPWVDDLIPLMAEGLILPYLDIPMQHASPRILKMMKRPGRVDRQLEAIQRWREICPDLVIRSTFIVGFPGETEEDFEMLLDFLREARLDRVGCFKYSEVEGAVANTIAELISEEVKEDRYHRFMEVQAEISAERLARFVGRTMDILIDDVDEEGAIGRSFADAPEIDGMVFINGETELEPGMLVRAVITHSDEHDLWAELVDADAEDEVEA</sequence>
<gene>
    <name evidence="1" type="primary">rimO</name>
    <name type="ordered locus">SO_4072</name>
</gene>
<organism>
    <name type="scientific">Shewanella oneidensis (strain ATCC 700550 / JCM 31522 / CIP 106686 / LMG 19005 / NCIMB 14063 / MR-1)</name>
    <dbReference type="NCBI Taxonomy" id="211586"/>
    <lineage>
        <taxon>Bacteria</taxon>
        <taxon>Pseudomonadati</taxon>
        <taxon>Pseudomonadota</taxon>
        <taxon>Gammaproteobacteria</taxon>
        <taxon>Alteromonadales</taxon>
        <taxon>Shewanellaceae</taxon>
        <taxon>Shewanella</taxon>
    </lineage>
</organism>
<proteinExistence type="inferred from homology"/>
<evidence type="ECO:0000255" key="1">
    <source>
        <dbReference type="HAMAP-Rule" id="MF_01865"/>
    </source>
</evidence>
<evidence type="ECO:0000255" key="2">
    <source>
        <dbReference type="PROSITE-ProRule" id="PRU01266"/>
    </source>
</evidence>
<reference key="1">
    <citation type="journal article" date="2002" name="Nat. Biotechnol.">
        <title>Genome sequence of the dissimilatory metal ion-reducing bacterium Shewanella oneidensis.</title>
        <authorList>
            <person name="Heidelberg J.F."/>
            <person name="Paulsen I.T."/>
            <person name="Nelson K.E."/>
            <person name="Gaidos E.J."/>
            <person name="Nelson W.C."/>
            <person name="Read T.D."/>
            <person name="Eisen J.A."/>
            <person name="Seshadri R."/>
            <person name="Ward N.L."/>
            <person name="Methe B.A."/>
            <person name="Clayton R.A."/>
            <person name="Meyer T."/>
            <person name="Tsapin A."/>
            <person name="Scott J."/>
            <person name="Beanan M.J."/>
            <person name="Brinkac L.M."/>
            <person name="Daugherty S.C."/>
            <person name="DeBoy R.T."/>
            <person name="Dodson R.J."/>
            <person name="Durkin A.S."/>
            <person name="Haft D.H."/>
            <person name="Kolonay J.F."/>
            <person name="Madupu R."/>
            <person name="Peterson J.D."/>
            <person name="Umayam L.A."/>
            <person name="White O."/>
            <person name="Wolf A.M."/>
            <person name="Vamathevan J.J."/>
            <person name="Weidman J.F."/>
            <person name="Impraim M."/>
            <person name="Lee K."/>
            <person name="Berry K.J."/>
            <person name="Lee C."/>
            <person name="Mueller J."/>
            <person name="Khouri H.M."/>
            <person name="Gill J."/>
            <person name="Utterback T.R."/>
            <person name="McDonald L.A."/>
            <person name="Feldblyum T.V."/>
            <person name="Smith H.O."/>
            <person name="Venter J.C."/>
            <person name="Nealson K.H."/>
            <person name="Fraser C.M."/>
        </authorList>
    </citation>
    <scope>NUCLEOTIDE SEQUENCE [LARGE SCALE GENOMIC DNA]</scope>
    <source>
        <strain>ATCC 700550 / JCM 31522 / CIP 106686 / LMG 19005 / NCIMB 14063 / MR-1</strain>
    </source>
</reference>
<dbReference type="EC" id="2.8.4.4" evidence="1"/>
<dbReference type="EMBL" id="AE014299">
    <property type="protein sequence ID" value="AAN57046.1"/>
    <property type="molecule type" value="Genomic_DNA"/>
</dbReference>
<dbReference type="RefSeq" id="NP_719602.1">
    <property type="nucleotide sequence ID" value="NC_004347.2"/>
</dbReference>
<dbReference type="RefSeq" id="WP_011073781.1">
    <property type="nucleotide sequence ID" value="NC_004347.2"/>
</dbReference>
<dbReference type="SMR" id="Q8EA37"/>
<dbReference type="STRING" id="211586.SO_4072"/>
<dbReference type="PaxDb" id="211586-SO_4072"/>
<dbReference type="KEGG" id="son:SO_4072"/>
<dbReference type="PATRIC" id="fig|211586.12.peg.3942"/>
<dbReference type="eggNOG" id="COG0621">
    <property type="taxonomic scope" value="Bacteria"/>
</dbReference>
<dbReference type="HOGENOM" id="CLU_018697_0_0_6"/>
<dbReference type="OrthoDB" id="9805215at2"/>
<dbReference type="PhylomeDB" id="Q8EA37"/>
<dbReference type="BioCyc" id="SONE211586:G1GMP-3765-MONOMER"/>
<dbReference type="Proteomes" id="UP000008186">
    <property type="component" value="Chromosome"/>
</dbReference>
<dbReference type="GO" id="GO:0005829">
    <property type="term" value="C:cytosol"/>
    <property type="evidence" value="ECO:0000318"/>
    <property type="project" value="GO_Central"/>
</dbReference>
<dbReference type="GO" id="GO:0051539">
    <property type="term" value="F:4 iron, 4 sulfur cluster binding"/>
    <property type="evidence" value="ECO:0000318"/>
    <property type="project" value="GO_Central"/>
</dbReference>
<dbReference type="GO" id="GO:0035599">
    <property type="term" value="F:aspartic acid methylthiotransferase activity"/>
    <property type="evidence" value="ECO:0000318"/>
    <property type="project" value="GO_Central"/>
</dbReference>
<dbReference type="GO" id="GO:0046872">
    <property type="term" value="F:metal ion binding"/>
    <property type="evidence" value="ECO:0007669"/>
    <property type="project" value="UniProtKB-KW"/>
</dbReference>
<dbReference type="GO" id="GO:0103039">
    <property type="term" value="F:protein methylthiotransferase activity"/>
    <property type="evidence" value="ECO:0007669"/>
    <property type="project" value="UniProtKB-EC"/>
</dbReference>
<dbReference type="GO" id="GO:0006400">
    <property type="term" value="P:tRNA modification"/>
    <property type="evidence" value="ECO:0007669"/>
    <property type="project" value="InterPro"/>
</dbReference>
<dbReference type="CDD" id="cd01335">
    <property type="entry name" value="Radical_SAM"/>
    <property type="match status" value="1"/>
</dbReference>
<dbReference type="FunFam" id="2.40.50.140:FF:000060">
    <property type="entry name" value="Ribosomal protein S12 methylthiotransferase RimO"/>
    <property type="match status" value="1"/>
</dbReference>
<dbReference type="FunFam" id="3.40.50.12160:FF:000002">
    <property type="entry name" value="Ribosomal protein S12 methylthiotransferase RimO"/>
    <property type="match status" value="1"/>
</dbReference>
<dbReference type="FunFam" id="3.80.30.20:FF:000001">
    <property type="entry name" value="tRNA-2-methylthio-N(6)-dimethylallyladenosine synthase 2"/>
    <property type="match status" value="1"/>
</dbReference>
<dbReference type="Gene3D" id="3.40.50.12160">
    <property type="entry name" value="Methylthiotransferase, N-terminal domain"/>
    <property type="match status" value="1"/>
</dbReference>
<dbReference type="Gene3D" id="2.40.50.140">
    <property type="entry name" value="Nucleic acid-binding proteins"/>
    <property type="match status" value="1"/>
</dbReference>
<dbReference type="Gene3D" id="3.80.30.20">
    <property type="entry name" value="tm_1862 like domain"/>
    <property type="match status" value="1"/>
</dbReference>
<dbReference type="HAMAP" id="MF_01865">
    <property type="entry name" value="MTTase_RimO"/>
    <property type="match status" value="1"/>
</dbReference>
<dbReference type="InterPro" id="IPR006638">
    <property type="entry name" value="Elp3/MiaA/NifB-like_rSAM"/>
</dbReference>
<dbReference type="InterPro" id="IPR005839">
    <property type="entry name" value="Methylthiotransferase"/>
</dbReference>
<dbReference type="InterPro" id="IPR020612">
    <property type="entry name" value="Methylthiotransferase_CS"/>
</dbReference>
<dbReference type="InterPro" id="IPR013848">
    <property type="entry name" value="Methylthiotransferase_N"/>
</dbReference>
<dbReference type="InterPro" id="IPR038135">
    <property type="entry name" value="Methylthiotransferase_N_sf"/>
</dbReference>
<dbReference type="InterPro" id="IPR012340">
    <property type="entry name" value="NA-bd_OB-fold"/>
</dbReference>
<dbReference type="InterPro" id="IPR005840">
    <property type="entry name" value="Ribosomal_uS12_MeSTrfase_RimO"/>
</dbReference>
<dbReference type="InterPro" id="IPR007197">
    <property type="entry name" value="rSAM"/>
</dbReference>
<dbReference type="InterPro" id="IPR023404">
    <property type="entry name" value="rSAM_horseshoe"/>
</dbReference>
<dbReference type="InterPro" id="IPR002792">
    <property type="entry name" value="TRAM_dom"/>
</dbReference>
<dbReference type="NCBIfam" id="TIGR01125">
    <property type="entry name" value="30S ribosomal protein S12 methylthiotransferase RimO"/>
    <property type="match status" value="1"/>
</dbReference>
<dbReference type="NCBIfam" id="TIGR00089">
    <property type="entry name" value="MiaB/RimO family radical SAM methylthiotransferase"/>
    <property type="match status" value="1"/>
</dbReference>
<dbReference type="PANTHER" id="PTHR43837">
    <property type="entry name" value="RIBOSOMAL PROTEIN S12 METHYLTHIOTRANSFERASE RIMO"/>
    <property type="match status" value="1"/>
</dbReference>
<dbReference type="PANTHER" id="PTHR43837:SF1">
    <property type="entry name" value="RIBOSOMAL PROTEIN US12 METHYLTHIOTRANSFERASE RIMO"/>
    <property type="match status" value="1"/>
</dbReference>
<dbReference type="Pfam" id="PF04055">
    <property type="entry name" value="Radical_SAM"/>
    <property type="match status" value="1"/>
</dbReference>
<dbReference type="Pfam" id="PF18693">
    <property type="entry name" value="TRAM_2"/>
    <property type="match status" value="1"/>
</dbReference>
<dbReference type="Pfam" id="PF00919">
    <property type="entry name" value="UPF0004"/>
    <property type="match status" value="1"/>
</dbReference>
<dbReference type="SFLD" id="SFLDG01082">
    <property type="entry name" value="B12-binding_domain_containing"/>
    <property type="match status" value="1"/>
</dbReference>
<dbReference type="SFLD" id="SFLDS00029">
    <property type="entry name" value="Radical_SAM"/>
    <property type="match status" value="1"/>
</dbReference>
<dbReference type="SFLD" id="SFLDF00274">
    <property type="entry name" value="ribosomal_protein_S12_methylth"/>
    <property type="match status" value="1"/>
</dbReference>
<dbReference type="SMART" id="SM00729">
    <property type="entry name" value="Elp3"/>
    <property type="match status" value="1"/>
</dbReference>
<dbReference type="SUPFAM" id="SSF102114">
    <property type="entry name" value="Radical SAM enzymes"/>
    <property type="match status" value="1"/>
</dbReference>
<dbReference type="PROSITE" id="PS51449">
    <property type="entry name" value="MTTASE_N"/>
    <property type="match status" value="1"/>
</dbReference>
<dbReference type="PROSITE" id="PS01278">
    <property type="entry name" value="MTTASE_RADICAL"/>
    <property type="match status" value="1"/>
</dbReference>
<dbReference type="PROSITE" id="PS51918">
    <property type="entry name" value="RADICAL_SAM"/>
    <property type="match status" value="1"/>
</dbReference>
<dbReference type="PROSITE" id="PS50926">
    <property type="entry name" value="TRAM"/>
    <property type="match status" value="1"/>
</dbReference>
<protein>
    <recommendedName>
        <fullName evidence="1">Ribosomal protein uS12 methylthiotransferase RimO</fullName>
        <shortName evidence="1">uS12 MTTase</shortName>
        <shortName evidence="1">uS12 methylthiotransferase</shortName>
        <ecNumber evidence="1">2.8.4.4</ecNumber>
    </recommendedName>
    <alternativeName>
        <fullName evidence="1">Ribosomal protein uS12 (aspartate-C(3))-methylthiotransferase</fullName>
    </alternativeName>
    <alternativeName>
        <fullName evidence="1">Ribosome maturation factor RimO</fullName>
    </alternativeName>
</protein>